<gene>
    <name type="primary">aroC</name>
    <name type="ordered locus">CRP_079</name>
</gene>
<accession>Q05FR1</accession>
<proteinExistence type="inferred from homology"/>
<organism>
    <name type="scientific">Carsonella ruddii (strain PV)</name>
    <dbReference type="NCBI Taxonomy" id="387662"/>
    <lineage>
        <taxon>Bacteria</taxon>
        <taxon>Pseudomonadati</taxon>
        <taxon>Pseudomonadota</taxon>
        <taxon>Gammaproteobacteria</taxon>
        <taxon>Oceanospirillales</taxon>
        <taxon>Halomonadaceae</taxon>
        <taxon>Zymobacter group</taxon>
        <taxon>Candidatus Carsonella</taxon>
    </lineage>
</organism>
<protein>
    <recommendedName>
        <fullName>Chorismate synthase</fullName>
        <ecNumber>4.2.3.5</ecNumber>
    </recommendedName>
    <alternativeName>
        <fullName>5-enolpyruvylshikimate-3-phosphate phospholyase</fullName>
    </alternativeName>
</protein>
<keyword id="KW-0028">Amino-acid biosynthesis</keyword>
<keyword id="KW-0057">Aromatic amino acid biosynthesis</keyword>
<keyword id="KW-0456">Lyase</keyword>
<name>AROC_CARRP</name>
<evidence type="ECO:0000250" key="1"/>
<evidence type="ECO:0000305" key="2"/>
<sequence length="345" mass="39214">MNNSYGEIIKISTFGESHGLIIGALIDGFFSNLYISEKFIQKNLNLRKPFTSLFSTQRREQDKVKIFTGIFKNKTTGAPVLMLIKNNDKQSSDYNNISLNFRPGHADYTYFLKYKFRDYRGGGRSSARETACRVASGCVFKNLIYNKGVIVRSYIKKIGFLKINFKYWNYTLNRFFSNLLFINEIKDIINNCKNSCNSLSSEIVIIINGLEPSLGDPLYKKINSTISNYLLSINATKSICFGFNFKNKNSFQVKDEIKNSGFTSNNNGGILAGITNGQPLVIKILFKPTSSTSRKIKTINEKLKNITNKTYGRHDPCVGLRAVPVIESMLYTILINKILKKKIYE</sequence>
<feature type="chain" id="PRO_0000405966" description="Chorismate synthase">
    <location>
        <begin position="1"/>
        <end position="345"/>
    </location>
</feature>
<dbReference type="EC" id="4.2.3.5"/>
<dbReference type="EMBL" id="AP009180">
    <property type="protein sequence ID" value="BAF35110.1"/>
    <property type="molecule type" value="Genomic_DNA"/>
</dbReference>
<dbReference type="RefSeq" id="WP_011672302.1">
    <property type="nucleotide sequence ID" value="NC_008512.1"/>
</dbReference>
<dbReference type="SMR" id="Q05FR1"/>
<dbReference type="STRING" id="387662.CRP_079"/>
<dbReference type="KEGG" id="crp:CRP_079"/>
<dbReference type="HOGENOM" id="CLU_034547_0_2_6"/>
<dbReference type="OrthoDB" id="9771806at2"/>
<dbReference type="UniPathway" id="UPA00053">
    <property type="reaction ID" value="UER00090"/>
</dbReference>
<dbReference type="Proteomes" id="UP000000777">
    <property type="component" value="Chromosome"/>
</dbReference>
<dbReference type="GO" id="GO:0005829">
    <property type="term" value="C:cytosol"/>
    <property type="evidence" value="ECO:0007669"/>
    <property type="project" value="TreeGrafter"/>
</dbReference>
<dbReference type="GO" id="GO:0004107">
    <property type="term" value="F:chorismate synthase activity"/>
    <property type="evidence" value="ECO:0007669"/>
    <property type="project" value="UniProtKB-UniRule"/>
</dbReference>
<dbReference type="GO" id="GO:0010181">
    <property type="term" value="F:FMN binding"/>
    <property type="evidence" value="ECO:0007669"/>
    <property type="project" value="TreeGrafter"/>
</dbReference>
<dbReference type="GO" id="GO:0008652">
    <property type="term" value="P:amino acid biosynthetic process"/>
    <property type="evidence" value="ECO:0007669"/>
    <property type="project" value="UniProtKB-KW"/>
</dbReference>
<dbReference type="GO" id="GO:0009073">
    <property type="term" value="P:aromatic amino acid family biosynthetic process"/>
    <property type="evidence" value="ECO:0007669"/>
    <property type="project" value="UniProtKB-KW"/>
</dbReference>
<dbReference type="GO" id="GO:0009423">
    <property type="term" value="P:chorismate biosynthetic process"/>
    <property type="evidence" value="ECO:0007669"/>
    <property type="project" value="UniProtKB-UniRule"/>
</dbReference>
<dbReference type="CDD" id="cd07304">
    <property type="entry name" value="Chorismate_synthase"/>
    <property type="match status" value="1"/>
</dbReference>
<dbReference type="Gene3D" id="3.60.150.10">
    <property type="entry name" value="Chorismate synthase AroC"/>
    <property type="match status" value="1"/>
</dbReference>
<dbReference type="InterPro" id="IPR000453">
    <property type="entry name" value="Chorismate_synth"/>
</dbReference>
<dbReference type="InterPro" id="IPR035904">
    <property type="entry name" value="Chorismate_synth_AroC_sf"/>
</dbReference>
<dbReference type="InterPro" id="IPR020541">
    <property type="entry name" value="Chorismate_synthase_CS"/>
</dbReference>
<dbReference type="NCBIfam" id="TIGR00033">
    <property type="entry name" value="aroC"/>
    <property type="match status" value="1"/>
</dbReference>
<dbReference type="NCBIfam" id="NF003793">
    <property type="entry name" value="PRK05382.1"/>
    <property type="match status" value="1"/>
</dbReference>
<dbReference type="PANTHER" id="PTHR21085">
    <property type="entry name" value="CHORISMATE SYNTHASE"/>
    <property type="match status" value="1"/>
</dbReference>
<dbReference type="PANTHER" id="PTHR21085:SF0">
    <property type="entry name" value="CHORISMATE SYNTHASE"/>
    <property type="match status" value="1"/>
</dbReference>
<dbReference type="Pfam" id="PF01264">
    <property type="entry name" value="Chorismate_synt"/>
    <property type="match status" value="1"/>
</dbReference>
<dbReference type="PIRSF" id="PIRSF001456">
    <property type="entry name" value="Chorismate_synth"/>
    <property type="match status" value="1"/>
</dbReference>
<dbReference type="SUPFAM" id="SSF103263">
    <property type="entry name" value="Chorismate synthase, AroC"/>
    <property type="match status" value="1"/>
</dbReference>
<dbReference type="PROSITE" id="PS00789">
    <property type="entry name" value="CHORISMATE_SYNTHASE_3"/>
    <property type="match status" value="1"/>
</dbReference>
<comment type="catalytic activity">
    <reaction>
        <text>5-O-(1-carboxyvinyl)-3-phosphoshikimate = chorismate + phosphate</text>
        <dbReference type="Rhea" id="RHEA:21020"/>
        <dbReference type="ChEBI" id="CHEBI:29748"/>
        <dbReference type="ChEBI" id="CHEBI:43474"/>
        <dbReference type="ChEBI" id="CHEBI:57701"/>
        <dbReference type="EC" id="4.2.3.5"/>
    </reaction>
</comment>
<comment type="cofactor">
    <cofactor evidence="1">
        <name>FMNH2</name>
        <dbReference type="ChEBI" id="CHEBI:57618"/>
    </cofactor>
</comment>
<comment type="pathway">
    <text>Metabolic intermediate biosynthesis; chorismate biosynthesis; chorismate from D-erythrose 4-phosphate and phosphoenolpyruvate: step 7/7.</text>
</comment>
<comment type="subunit">
    <text evidence="1">Homotetramer.</text>
</comment>
<comment type="similarity">
    <text evidence="2">Belongs to the chorismate synthase family.</text>
</comment>
<reference key="1">
    <citation type="journal article" date="2006" name="Science">
        <title>The 160-kilobase genome of the bacterial endosymbiont Carsonella.</title>
        <authorList>
            <person name="Nakabachi A."/>
            <person name="Yamashita A."/>
            <person name="Toh H."/>
            <person name="Ishikawa H."/>
            <person name="Dunbar H.E."/>
            <person name="Moran N.A."/>
            <person name="Hattori M."/>
        </authorList>
    </citation>
    <scope>NUCLEOTIDE SEQUENCE [LARGE SCALE GENOMIC DNA]</scope>
    <source>
        <strain>PV</strain>
    </source>
</reference>